<comment type="miscellaneous">
    <text>On the 2D-gel the determined pI of this unknown protein is: 6.6, its MW is: 19 kDa.</text>
</comment>
<protein>
    <recommendedName>
        <fullName>Unknown protein from 2D-PAGE of fibroblasts</fullName>
    </recommendedName>
    <alternativeName>
        <fullName>P19</fullName>
    </alternativeName>
</protein>
<dbReference type="InParanoid" id="P38639"/>
<dbReference type="Proteomes" id="UP000000589">
    <property type="component" value="Unplaced"/>
</dbReference>
<accession>P38639</accession>
<keyword id="KW-0903">Direct protein sequencing</keyword>
<keyword id="KW-1185">Reference proteome</keyword>
<name>UF01_MOUSE</name>
<reference key="1">
    <citation type="journal article" date="1994" name="Electrophoresis">
        <title>Separation and sequencing of familiar and novel murine proteins using preparative two-dimensional gel electrophoresis.</title>
        <authorList>
            <person name="Merrick B.A."/>
            <person name="Patterson R.M."/>
            <person name="Wichter L.L."/>
            <person name="He C."/>
            <person name="Selkirk J.K."/>
        </authorList>
    </citation>
    <scope>PROTEIN SEQUENCE</scope>
    <source>
        <tissue>Fibroblast</tissue>
    </source>
</reference>
<feature type="chain" id="PRO_0000055547" description="Unknown protein from 2D-PAGE of fibroblasts">
    <location>
        <begin position="1"/>
        <end position="5" status="greater than"/>
    </location>
</feature>
<feature type="non-terminal residue">
    <location>
        <position position="5"/>
    </location>
</feature>
<proteinExistence type="evidence at protein level"/>
<organism>
    <name type="scientific">Mus musculus</name>
    <name type="common">Mouse</name>
    <dbReference type="NCBI Taxonomy" id="10090"/>
    <lineage>
        <taxon>Eukaryota</taxon>
        <taxon>Metazoa</taxon>
        <taxon>Chordata</taxon>
        <taxon>Craniata</taxon>
        <taxon>Vertebrata</taxon>
        <taxon>Euteleostomi</taxon>
        <taxon>Mammalia</taxon>
        <taxon>Eutheria</taxon>
        <taxon>Euarchontoglires</taxon>
        <taxon>Glires</taxon>
        <taxon>Rodentia</taxon>
        <taxon>Myomorpha</taxon>
        <taxon>Muroidea</taxon>
        <taxon>Muridae</taxon>
        <taxon>Murinae</taxon>
        <taxon>Mus</taxon>
        <taxon>Mus</taxon>
    </lineage>
</organism>
<sequence length="5" mass="717">WIGRW</sequence>